<reference key="1">
    <citation type="journal article" date="2003" name="Microbiol. Mol. Biol. Rev.">
        <title>Bacteriophage T4 genome.</title>
        <authorList>
            <person name="Miller E.S."/>
            <person name="Kutter E."/>
            <person name="Mosig G."/>
            <person name="Arisaka F."/>
            <person name="Kunisawa T."/>
            <person name="Ruger W."/>
        </authorList>
    </citation>
    <scope>NUCLEOTIDE SEQUENCE [LARGE SCALE GENOMIC DNA]</scope>
</reference>
<reference key="2">
    <citation type="journal article" date="1990" name="Nucleic Acids Res.">
        <title>The nucleotide sequence of the region of bacteriophage T4 inh(lip)-hoc genes.</title>
        <authorList>
            <person name="Kaliman A.V."/>
            <person name="Khasanova M.A."/>
            <person name="Kryukov V.M."/>
            <person name="Tanyashin V.I."/>
            <person name="Bayev A.A."/>
        </authorList>
    </citation>
    <scope>NUCLEOTIDE SEQUENCE [GENOMIC DNA] OF 1-37</scope>
</reference>
<reference key="3">
    <citation type="submission" date="1992-11" db="EMBL/GenBank/DDBJ databases">
        <authorList>
            <person name="Kaliman A.V."/>
            <person name="Khasanova M.A."/>
            <person name="Tanyashin V.I."/>
        </authorList>
    </citation>
    <scope>NUCLEOTIDE SEQUENCE [GENOMIC DNA] OF 37-56</scope>
</reference>
<organismHost>
    <name type="scientific">Escherichia coli</name>
    <dbReference type="NCBI Taxonomy" id="562"/>
</organismHost>
<organism>
    <name type="scientific">Enterobacteria phage T4</name>
    <name type="common">Bacteriophage T4</name>
    <dbReference type="NCBI Taxonomy" id="10665"/>
    <lineage>
        <taxon>Viruses</taxon>
        <taxon>Duplodnaviria</taxon>
        <taxon>Heunggongvirae</taxon>
        <taxon>Uroviricota</taxon>
        <taxon>Caudoviricetes</taxon>
        <taxon>Straboviridae</taxon>
        <taxon>Tevenvirinae</taxon>
        <taxon>Tequatrovirus</taxon>
    </lineage>
</organism>
<gene>
    <name type="primary">y10C</name>
    <name type="synonym">24.3</name>
</gene>
<proteinExistence type="predicted"/>
<sequence>MRTEVVVFTLHESGKSFIEIARELNLQAKEVAVLWAREKVVYRKRHINKKVKNGTV</sequence>
<keyword id="KW-1185">Reference proteome</keyword>
<dbReference type="EMBL" id="AF158101">
    <property type="protein sequence ID" value="AAD42432.1"/>
    <property type="molecule type" value="Genomic_DNA"/>
</dbReference>
<dbReference type="EMBL" id="X14869">
    <property type="status" value="NOT_ANNOTATED_CDS"/>
    <property type="molecule type" value="Genomic_DNA"/>
</dbReference>
<dbReference type="EMBL" id="X69459">
    <property type="status" value="NOT_ANNOTATED_CDS"/>
    <property type="molecule type" value="Genomic_DNA"/>
</dbReference>
<dbReference type="RefSeq" id="NP_049792.1">
    <property type="nucleotide sequence ID" value="NC_000866.4"/>
</dbReference>
<dbReference type="SMR" id="P39492"/>
<dbReference type="GeneID" id="1258562"/>
<dbReference type="KEGG" id="vg:1258562"/>
<dbReference type="OrthoDB" id="24181at10239"/>
<dbReference type="Proteomes" id="UP000009087">
    <property type="component" value="Segment"/>
</dbReference>
<dbReference type="InterPro" id="IPR021404">
    <property type="entry name" value="Phage_T4_Gp24.3"/>
</dbReference>
<dbReference type="Pfam" id="PF11242">
    <property type="entry name" value="DUF2774"/>
    <property type="match status" value="1"/>
</dbReference>
<feature type="chain" id="PRO_0000165158" description="Uncharacterized 6.6 kDa protein in Gp24-hoc intergenic region">
    <location>
        <begin position="1"/>
        <end position="56"/>
    </location>
</feature>
<name>Y10C_BPT4</name>
<accession>P39492</accession>
<protein>
    <recommendedName>
        <fullName>Uncharacterized 6.6 kDa protein in Gp24-hoc intergenic region</fullName>
    </recommendedName>
</protein>